<reference key="1">
    <citation type="journal article" date="2005" name="Nucleic Acids Res.">
        <title>Genome dynamics and diversity of Shigella species, the etiologic agents of bacillary dysentery.</title>
        <authorList>
            <person name="Yang F."/>
            <person name="Yang J."/>
            <person name="Zhang X."/>
            <person name="Chen L."/>
            <person name="Jiang Y."/>
            <person name="Yan Y."/>
            <person name="Tang X."/>
            <person name="Wang J."/>
            <person name="Xiong Z."/>
            <person name="Dong J."/>
            <person name="Xue Y."/>
            <person name="Zhu Y."/>
            <person name="Xu X."/>
            <person name="Sun L."/>
            <person name="Chen S."/>
            <person name="Nie H."/>
            <person name="Peng J."/>
            <person name="Xu J."/>
            <person name="Wang Y."/>
            <person name="Yuan Z."/>
            <person name="Wen Y."/>
            <person name="Yao Z."/>
            <person name="Shen Y."/>
            <person name="Qiang B."/>
            <person name="Hou Y."/>
            <person name="Yu J."/>
            <person name="Jin Q."/>
        </authorList>
    </citation>
    <scope>NUCLEOTIDE SEQUENCE [LARGE SCALE GENOMIC DNA]</scope>
    <source>
        <strain>Sd197</strain>
    </source>
</reference>
<dbReference type="EMBL" id="CP000034">
    <property type="protein sequence ID" value="ABB63210.1"/>
    <property type="molecule type" value="Genomic_DNA"/>
</dbReference>
<dbReference type="RefSeq" id="WP_005018485.1">
    <property type="nucleotide sequence ID" value="NC_007606.1"/>
</dbReference>
<dbReference type="RefSeq" id="YP_404701.1">
    <property type="nucleotide sequence ID" value="NC_007606.1"/>
</dbReference>
<dbReference type="SMR" id="Q32BU5"/>
<dbReference type="STRING" id="300267.SDY_3200"/>
<dbReference type="EnsemblBacteria" id="ABB63210">
    <property type="protein sequence ID" value="ABB63210"/>
    <property type="gene ID" value="SDY_3200"/>
</dbReference>
<dbReference type="KEGG" id="sdy:SDY_3200"/>
<dbReference type="PATRIC" id="fig|300267.13.peg.3824"/>
<dbReference type="HOGENOM" id="CLU_015114_1_3_6"/>
<dbReference type="Proteomes" id="UP000002716">
    <property type="component" value="Chromosome"/>
</dbReference>
<dbReference type="GO" id="GO:0005886">
    <property type="term" value="C:plasma membrane"/>
    <property type="evidence" value="ECO:0007669"/>
    <property type="project" value="UniProtKB-SubCell"/>
</dbReference>
<dbReference type="GO" id="GO:0046872">
    <property type="term" value="F:metal ion binding"/>
    <property type="evidence" value="ECO:0007669"/>
    <property type="project" value="UniProtKB-KW"/>
</dbReference>
<dbReference type="GO" id="GO:0005385">
    <property type="term" value="F:zinc ion transmembrane transporter activity"/>
    <property type="evidence" value="ECO:0007669"/>
    <property type="project" value="UniProtKB-UniRule"/>
</dbReference>
<dbReference type="HAMAP" id="MF_00548">
    <property type="entry name" value="ZupT"/>
    <property type="match status" value="1"/>
</dbReference>
<dbReference type="InterPro" id="IPR003689">
    <property type="entry name" value="ZIP"/>
</dbReference>
<dbReference type="InterPro" id="IPR023498">
    <property type="entry name" value="Zn_transptr_ZupT"/>
</dbReference>
<dbReference type="NCBIfam" id="NF003243">
    <property type="entry name" value="PRK04201.1"/>
    <property type="match status" value="1"/>
</dbReference>
<dbReference type="PANTHER" id="PTHR11040:SF205">
    <property type="entry name" value="ZINC TRANSPORTER ZUPT"/>
    <property type="match status" value="1"/>
</dbReference>
<dbReference type="PANTHER" id="PTHR11040">
    <property type="entry name" value="ZINC/IRON TRANSPORTER"/>
    <property type="match status" value="1"/>
</dbReference>
<dbReference type="Pfam" id="PF02535">
    <property type="entry name" value="Zip"/>
    <property type="match status" value="2"/>
</dbReference>
<gene>
    <name evidence="1" type="primary">zupT</name>
    <name type="ordered locus">SDY_3200</name>
</gene>
<feature type="chain" id="PRO_1000017778" description="Zinc transporter ZupT">
    <location>
        <begin position="1"/>
        <end position="257"/>
    </location>
</feature>
<feature type="transmembrane region" description="Helical" evidence="1">
    <location>
        <begin position="5"/>
        <end position="25"/>
    </location>
</feature>
<feature type="transmembrane region" description="Helical" evidence="1">
    <location>
        <begin position="32"/>
        <end position="52"/>
    </location>
</feature>
<feature type="transmembrane region" description="Helical" evidence="1">
    <location>
        <begin position="61"/>
        <end position="81"/>
    </location>
</feature>
<feature type="transmembrane region" description="Helical" evidence="1">
    <location>
        <begin position="109"/>
        <end position="129"/>
    </location>
</feature>
<feature type="transmembrane region" description="Helical" evidence="1">
    <location>
        <begin position="137"/>
        <end position="157"/>
    </location>
</feature>
<feature type="transmembrane region" description="Helical" evidence="1">
    <location>
        <begin position="171"/>
        <end position="191"/>
    </location>
</feature>
<feature type="transmembrane region" description="Helical" evidence="1">
    <location>
        <begin position="195"/>
        <end position="215"/>
    </location>
</feature>
<feature type="transmembrane region" description="Helical" evidence="1">
    <location>
        <begin position="236"/>
        <end position="256"/>
    </location>
</feature>
<feature type="binding site" description="M2 metal binding site" evidence="1">
    <location>
        <position position="120"/>
    </location>
    <ligand>
        <name>Fe(2+)</name>
        <dbReference type="ChEBI" id="CHEBI:29033"/>
    </ligand>
</feature>
<feature type="binding site" description="M2 metal binding site" evidence="1">
    <location>
        <position position="123"/>
    </location>
    <ligand>
        <name>Fe(2+)</name>
        <dbReference type="ChEBI" id="CHEBI:29033"/>
    </ligand>
</feature>
<feature type="binding site" description="M1 metal binding site" evidence="1">
    <location>
        <position position="123"/>
    </location>
    <ligand>
        <name>Zn(2+)</name>
        <dbReference type="ChEBI" id="CHEBI:29105"/>
    </ligand>
</feature>
<feature type="binding site" description="M1 metal binding site" evidence="1">
    <location>
        <position position="148"/>
    </location>
    <ligand>
        <name>Zn(2+)</name>
        <dbReference type="ChEBI" id="CHEBI:29105"/>
    </ligand>
</feature>
<feature type="binding site" description="M2 metal binding site" evidence="1">
    <location>
        <position position="149"/>
    </location>
    <ligand>
        <name>Fe(2+)</name>
        <dbReference type="ChEBI" id="CHEBI:29033"/>
    </ligand>
</feature>
<feature type="binding site" description="M2 metal binding site" evidence="1">
    <location>
        <position position="152"/>
    </location>
    <ligand>
        <name>Fe(2+)</name>
        <dbReference type="ChEBI" id="CHEBI:29033"/>
    </ligand>
</feature>
<feature type="binding site" description="M1 metal binding site" evidence="1">
    <location>
        <position position="152"/>
    </location>
    <ligand>
        <name>Zn(2+)</name>
        <dbReference type="ChEBI" id="CHEBI:29105"/>
    </ligand>
</feature>
<feature type="binding site" description="M2 metal binding site" evidence="1">
    <location>
        <position position="181"/>
    </location>
    <ligand>
        <name>Fe(2+)</name>
        <dbReference type="ChEBI" id="CHEBI:29033"/>
    </ligand>
</feature>
<proteinExistence type="inferred from homology"/>
<name>ZUPT_SHIDS</name>
<keyword id="KW-0997">Cell inner membrane</keyword>
<keyword id="KW-1003">Cell membrane</keyword>
<keyword id="KW-0406">Ion transport</keyword>
<keyword id="KW-0408">Iron</keyword>
<keyword id="KW-0472">Membrane</keyword>
<keyword id="KW-0479">Metal-binding</keyword>
<keyword id="KW-1185">Reference proteome</keyword>
<keyword id="KW-0812">Transmembrane</keyword>
<keyword id="KW-1133">Transmembrane helix</keyword>
<keyword id="KW-0813">Transport</keyword>
<keyword id="KW-0862">Zinc</keyword>
<keyword id="KW-0864">Zinc transport</keyword>
<sequence>MSVPLILTILAGAATFIGAFLGVLGQKTSNRLLAFSLGFAAGIMLLISLMEMLPAALAAEGMSPVLGYGMFIFGLLGYLGLDRMLPHAHPQDLMQKSVQPLPKSIKRTAILLTLGISLHNFPEGIATFVTASSNLELGFGIALAVALHNIPEGLAVVGPVYAATGSKRTAILWAGISGLAEILGGVLAWLILGSMISPVVMAAIMAAVAGIMVALSVDELMPLAKEIDPNNNPSYGVLCGMSVMGFSLVLLQTAGIG</sequence>
<accession>Q32BU5</accession>
<comment type="function">
    <text evidence="1">Mediates zinc uptake. May also transport other divalent cations.</text>
</comment>
<comment type="catalytic activity">
    <reaction evidence="1">
        <text>Zn(2+)(in) = Zn(2+)(out)</text>
        <dbReference type="Rhea" id="RHEA:29351"/>
        <dbReference type="ChEBI" id="CHEBI:29105"/>
    </reaction>
</comment>
<comment type="subcellular location">
    <subcellularLocation>
        <location evidence="1">Cell inner membrane</location>
        <topology evidence="1">Multi-pass membrane protein</topology>
    </subcellularLocation>
</comment>
<comment type="similarity">
    <text evidence="1">Belongs to the ZIP transporter (TC 2.A.5) family. ZupT subfamily.</text>
</comment>
<evidence type="ECO:0000255" key="1">
    <source>
        <dbReference type="HAMAP-Rule" id="MF_00548"/>
    </source>
</evidence>
<protein>
    <recommendedName>
        <fullName evidence="1">Zinc transporter ZupT</fullName>
    </recommendedName>
</protein>
<organism>
    <name type="scientific">Shigella dysenteriae serotype 1 (strain Sd197)</name>
    <dbReference type="NCBI Taxonomy" id="300267"/>
    <lineage>
        <taxon>Bacteria</taxon>
        <taxon>Pseudomonadati</taxon>
        <taxon>Pseudomonadota</taxon>
        <taxon>Gammaproteobacteria</taxon>
        <taxon>Enterobacterales</taxon>
        <taxon>Enterobacteriaceae</taxon>
        <taxon>Shigella</taxon>
    </lineage>
</organism>